<comment type="function">
    <text evidence="1">Specifically methylates the N4 position of cytidine in position 1402 (C1402) of 16S rRNA.</text>
</comment>
<comment type="catalytic activity">
    <reaction evidence="1">
        <text>cytidine(1402) in 16S rRNA + S-adenosyl-L-methionine = N(4)-methylcytidine(1402) in 16S rRNA + S-adenosyl-L-homocysteine + H(+)</text>
        <dbReference type="Rhea" id="RHEA:42928"/>
        <dbReference type="Rhea" id="RHEA-COMP:10286"/>
        <dbReference type="Rhea" id="RHEA-COMP:10287"/>
        <dbReference type="ChEBI" id="CHEBI:15378"/>
        <dbReference type="ChEBI" id="CHEBI:57856"/>
        <dbReference type="ChEBI" id="CHEBI:59789"/>
        <dbReference type="ChEBI" id="CHEBI:74506"/>
        <dbReference type="ChEBI" id="CHEBI:82748"/>
        <dbReference type="EC" id="2.1.1.199"/>
    </reaction>
</comment>
<comment type="subcellular location">
    <subcellularLocation>
        <location evidence="1">Cytoplasm</location>
    </subcellularLocation>
</comment>
<comment type="similarity">
    <text evidence="1">Belongs to the methyltransferase superfamily. RsmH family.</text>
</comment>
<keyword id="KW-0963">Cytoplasm</keyword>
<keyword id="KW-0489">Methyltransferase</keyword>
<keyword id="KW-0698">rRNA processing</keyword>
<keyword id="KW-0949">S-adenosyl-L-methionine</keyword>
<keyword id="KW-0808">Transferase</keyword>
<protein>
    <recommendedName>
        <fullName evidence="1">Ribosomal RNA small subunit methyltransferase H</fullName>
        <ecNumber evidence="1">2.1.1.199</ecNumber>
    </recommendedName>
    <alternativeName>
        <fullName evidence="1">16S rRNA m(4)C1402 methyltransferase</fullName>
    </alternativeName>
    <alternativeName>
        <fullName evidence="1">rRNA (cytosine-N(4)-)-methyltransferase RsmH</fullName>
    </alternativeName>
</protein>
<reference key="1">
    <citation type="submission" date="2007-05" db="EMBL/GenBank/DDBJ databases">
        <title>Complete sequence of chromosome of Psychrobacter sp. PRwf-1.</title>
        <authorList>
            <consortium name="US DOE Joint Genome Institute"/>
            <person name="Copeland A."/>
            <person name="Lucas S."/>
            <person name="Lapidus A."/>
            <person name="Barry K."/>
            <person name="Detter J.C."/>
            <person name="Glavina del Rio T."/>
            <person name="Hammon N."/>
            <person name="Israni S."/>
            <person name="Dalin E."/>
            <person name="Tice H."/>
            <person name="Pitluck S."/>
            <person name="Chain P."/>
            <person name="Malfatti S."/>
            <person name="Shin M."/>
            <person name="Vergez L."/>
            <person name="Schmutz J."/>
            <person name="Larimer F."/>
            <person name="Land M."/>
            <person name="Hauser L."/>
            <person name="Kyrpides N."/>
            <person name="Kim E."/>
            <person name="Tiedje J."/>
            <person name="Richardson P."/>
        </authorList>
    </citation>
    <scope>NUCLEOTIDE SEQUENCE [LARGE SCALE GENOMIC DNA]</scope>
    <source>
        <strain>PRwf-1</strain>
    </source>
</reference>
<feature type="chain" id="PRO_0000387060" description="Ribosomal RNA small subunit methyltransferase H">
    <location>
        <begin position="1"/>
        <end position="339"/>
    </location>
</feature>
<feature type="region of interest" description="Disordered" evidence="2">
    <location>
        <begin position="274"/>
        <end position="309"/>
    </location>
</feature>
<feature type="region of interest" description="Disordered" evidence="2">
    <location>
        <begin position="320"/>
        <end position="339"/>
    </location>
</feature>
<feature type="compositionally biased region" description="Polar residues" evidence="2">
    <location>
        <begin position="325"/>
        <end position="339"/>
    </location>
</feature>
<feature type="binding site" evidence="1">
    <location>
        <begin position="56"/>
        <end position="58"/>
    </location>
    <ligand>
        <name>S-adenosyl-L-methionine</name>
        <dbReference type="ChEBI" id="CHEBI:59789"/>
    </ligand>
</feature>
<feature type="binding site" evidence="1">
    <location>
        <position position="76"/>
    </location>
    <ligand>
        <name>S-adenosyl-L-methionine</name>
        <dbReference type="ChEBI" id="CHEBI:59789"/>
    </ligand>
</feature>
<feature type="binding site" evidence="1">
    <location>
        <position position="102"/>
    </location>
    <ligand>
        <name>S-adenosyl-L-methionine</name>
        <dbReference type="ChEBI" id="CHEBI:59789"/>
    </ligand>
</feature>
<feature type="binding site" evidence="1">
    <location>
        <position position="123"/>
    </location>
    <ligand>
        <name>S-adenosyl-L-methionine</name>
        <dbReference type="ChEBI" id="CHEBI:59789"/>
    </ligand>
</feature>
<feature type="binding site" evidence="1">
    <location>
        <position position="130"/>
    </location>
    <ligand>
        <name>S-adenosyl-L-methionine</name>
        <dbReference type="ChEBI" id="CHEBI:59789"/>
    </ligand>
</feature>
<name>RSMH_PSYWF</name>
<proteinExistence type="inferred from homology"/>
<dbReference type="EC" id="2.1.1.199" evidence="1"/>
<dbReference type="EMBL" id="CP000713">
    <property type="protein sequence ID" value="ABQ93092.1"/>
    <property type="molecule type" value="Genomic_DNA"/>
</dbReference>
<dbReference type="SMR" id="A5WBQ1"/>
<dbReference type="STRING" id="349106.PsycPRwf_0132"/>
<dbReference type="KEGG" id="prw:PsycPRwf_0132"/>
<dbReference type="eggNOG" id="COG0275">
    <property type="taxonomic scope" value="Bacteria"/>
</dbReference>
<dbReference type="HOGENOM" id="CLU_038422_2_0_6"/>
<dbReference type="GO" id="GO:0005737">
    <property type="term" value="C:cytoplasm"/>
    <property type="evidence" value="ECO:0007669"/>
    <property type="project" value="UniProtKB-SubCell"/>
</dbReference>
<dbReference type="GO" id="GO:0071424">
    <property type="term" value="F:rRNA (cytosine-N4-)-methyltransferase activity"/>
    <property type="evidence" value="ECO:0007669"/>
    <property type="project" value="UniProtKB-UniRule"/>
</dbReference>
<dbReference type="GO" id="GO:0070475">
    <property type="term" value="P:rRNA base methylation"/>
    <property type="evidence" value="ECO:0007669"/>
    <property type="project" value="UniProtKB-UniRule"/>
</dbReference>
<dbReference type="Gene3D" id="1.10.150.170">
    <property type="entry name" value="Putative methyltransferase TM0872, insert domain"/>
    <property type="match status" value="1"/>
</dbReference>
<dbReference type="Gene3D" id="3.40.50.150">
    <property type="entry name" value="Vaccinia Virus protein VP39"/>
    <property type="match status" value="1"/>
</dbReference>
<dbReference type="HAMAP" id="MF_01007">
    <property type="entry name" value="16SrRNA_methyltr_H"/>
    <property type="match status" value="1"/>
</dbReference>
<dbReference type="InterPro" id="IPR002903">
    <property type="entry name" value="RsmH"/>
</dbReference>
<dbReference type="InterPro" id="IPR023397">
    <property type="entry name" value="SAM-dep_MeTrfase_MraW_recog"/>
</dbReference>
<dbReference type="InterPro" id="IPR029063">
    <property type="entry name" value="SAM-dependent_MTases_sf"/>
</dbReference>
<dbReference type="NCBIfam" id="TIGR00006">
    <property type="entry name" value="16S rRNA (cytosine(1402)-N(4))-methyltransferase RsmH"/>
    <property type="match status" value="1"/>
</dbReference>
<dbReference type="PANTHER" id="PTHR11265:SF0">
    <property type="entry name" value="12S RRNA N4-METHYLCYTIDINE METHYLTRANSFERASE"/>
    <property type="match status" value="1"/>
</dbReference>
<dbReference type="PANTHER" id="PTHR11265">
    <property type="entry name" value="S-ADENOSYL-METHYLTRANSFERASE MRAW"/>
    <property type="match status" value="1"/>
</dbReference>
<dbReference type="Pfam" id="PF01795">
    <property type="entry name" value="Methyltransf_5"/>
    <property type="match status" value="1"/>
</dbReference>
<dbReference type="PIRSF" id="PIRSF004486">
    <property type="entry name" value="MraW"/>
    <property type="match status" value="1"/>
</dbReference>
<dbReference type="SUPFAM" id="SSF81799">
    <property type="entry name" value="Putative methyltransferase TM0872, insert domain"/>
    <property type="match status" value="1"/>
</dbReference>
<dbReference type="SUPFAM" id="SSF53335">
    <property type="entry name" value="S-adenosyl-L-methionine-dependent methyltransferases"/>
    <property type="match status" value="1"/>
</dbReference>
<evidence type="ECO:0000255" key="1">
    <source>
        <dbReference type="HAMAP-Rule" id="MF_01007"/>
    </source>
</evidence>
<evidence type="ECO:0000256" key="2">
    <source>
        <dbReference type="SAM" id="MobiDB-lite"/>
    </source>
</evidence>
<organism>
    <name type="scientific">Psychrobacter sp. (strain PRwf-1)</name>
    <dbReference type="NCBI Taxonomy" id="349106"/>
    <lineage>
        <taxon>Bacteria</taxon>
        <taxon>Pseudomonadati</taxon>
        <taxon>Pseudomonadota</taxon>
        <taxon>Gammaproteobacteria</taxon>
        <taxon>Moraxellales</taxon>
        <taxon>Moraxellaceae</taxon>
        <taxon>Psychrobacter</taxon>
    </lineage>
</organism>
<sequence>MTDVPTSAPRSTSKSEFSHETVLLFETVAAVLGEKSLNDNTPKHDGIYVDATFGRGGHSKLLLNYLSDDAKLFVFDKDPEAIDVANDLAAEDKRVIVVHDSFADMTQCLNSRGVSQVDGIMADLGVSSPQLDDGSRGFSFMRDGAIDMRMDTSRGQPVGEWLQTVDEETLADVLYDFGEERHSRRIARAIKGMTQYTSTLELAEVIKQAHPKWQKGKHPATQSFQAMRIFINNELGDIDSFLAQSLTLLAPQGQLAVISFHSLEDRRIKQFLQRHSRGQYPEDENLPMPPQRPRYFSKPKRIAPSKAEVTVNNRSRSAWLRVATRTDTPYNTDPSPQHS</sequence>
<accession>A5WBQ1</accession>
<gene>
    <name evidence="1" type="primary">rsmH</name>
    <name type="synonym">mraW</name>
    <name type="ordered locus">PsycPRwf_0132</name>
</gene>